<comment type="interaction">
    <interactant intactId="EBI-1053969">
        <id>Q6ICG6</id>
    </interactant>
    <interactant intactId="EBI-476295">
        <id>P31947</id>
        <label>SFN</label>
    </interactant>
    <organismsDiffer>false</organismsDiffer>
    <experiments>3</experiments>
</comment>
<comment type="interaction">
    <interactant intactId="EBI-1053969">
        <id>Q6ICG6</id>
    </interactant>
    <interactant intactId="EBI-356498">
        <id>P62258</id>
        <label>YWHAE</label>
    </interactant>
    <organismsDiffer>false</organismsDiffer>
    <experiments>5</experiments>
</comment>
<comment type="interaction">
    <interactant intactId="EBI-12401561">
        <id>Q6ICG6-3</id>
    </interactant>
    <interactant intactId="EBI-744115">
        <id>Q9C0F1</id>
        <label>CEP44</label>
    </interactant>
    <organismsDiffer>false</organismsDiffer>
    <experiments>3</experiments>
</comment>
<comment type="interaction">
    <interactant intactId="EBI-12401561">
        <id>Q6ICG6-3</id>
    </interactant>
    <interactant intactId="EBI-712105">
        <id>Q13352</id>
        <label>ITGB3BP</label>
    </interactant>
    <organismsDiffer>false</organismsDiffer>
    <experiments>3</experiments>
</comment>
<comment type="alternative products">
    <event type="alternative splicing"/>
    <isoform>
        <id>Q6ICG6-1</id>
        <name>1</name>
        <sequence type="displayed"/>
    </isoform>
    <isoform>
        <id>Q6ICG6-2</id>
        <name>2</name>
        <sequence type="described" ref="VSP_021309"/>
    </isoform>
    <isoform>
        <id>Q6ICG6-3</id>
        <name>3</name>
        <sequence type="described" ref="VSP_021310"/>
    </isoform>
</comment>
<organism>
    <name type="scientific">Homo sapiens</name>
    <name type="common">Human</name>
    <dbReference type="NCBI Taxonomy" id="9606"/>
    <lineage>
        <taxon>Eukaryota</taxon>
        <taxon>Metazoa</taxon>
        <taxon>Chordata</taxon>
        <taxon>Craniata</taxon>
        <taxon>Vertebrata</taxon>
        <taxon>Euteleostomi</taxon>
        <taxon>Mammalia</taxon>
        <taxon>Eutheria</taxon>
        <taxon>Euarchontoglires</taxon>
        <taxon>Primates</taxon>
        <taxon>Haplorrhini</taxon>
        <taxon>Catarrhini</taxon>
        <taxon>Hominidae</taxon>
        <taxon>Homo</taxon>
    </lineage>
</organism>
<name>K0930_HUMAN</name>
<evidence type="ECO:0000250" key="1">
    <source>
        <dbReference type="UniProtKB" id="Q3UE31"/>
    </source>
</evidence>
<evidence type="ECO:0000250" key="2">
    <source>
        <dbReference type="UniProtKB" id="Q4G008"/>
    </source>
</evidence>
<evidence type="ECO:0000256" key="3">
    <source>
        <dbReference type="SAM" id="MobiDB-lite"/>
    </source>
</evidence>
<evidence type="ECO:0000303" key="4">
    <source>
    </source>
</evidence>
<evidence type="ECO:0000303" key="5">
    <source>
    </source>
</evidence>
<evidence type="ECO:0007744" key="6">
    <source>
    </source>
</evidence>
<evidence type="ECO:0007744" key="7">
    <source>
    </source>
</evidence>
<evidence type="ECO:0007744" key="8">
    <source>
    </source>
</evidence>
<evidence type="ECO:0007744" key="9">
    <source>
    </source>
</evidence>
<accession>Q6ICG6</accession>
<accession>B0QY17</accession>
<accession>B0QY19</accession>
<accession>B3KT48</accession>
<accession>Q6ZVE5</accession>
<accession>Q7Z6K9</accession>
<accession>Q8IZ76</accession>
<accession>Q9Y2E2</accession>
<keyword id="KW-0025">Alternative splicing</keyword>
<keyword id="KW-0597">Phosphoprotein</keyword>
<keyword id="KW-1267">Proteomics identification</keyword>
<keyword id="KW-1185">Reference proteome</keyword>
<reference key="1">
    <citation type="journal article" date="2004" name="Genome Biol.">
        <title>A genome annotation-driven approach to cloning the human ORFeome.</title>
        <authorList>
            <person name="Collins J.E."/>
            <person name="Wright C.L."/>
            <person name="Edwards C.A."/>
            <person name="Davis M.P."/>
            <person name="Grinham J.A."/>
            <person name="Cole C.G."/>
            <person name="Goward M.E."/>
            <person name="Aguado B."/>
            <person name="Mallya M."/>
            <person name="Mokrab Y."/>
            <person name="Huckle E.J."/>
            <person name="Beare D.M."/>
            <person name="Dunham I."/>
        </authorList>
    </citation>
    <scope>NUCLEOTIDE SEQUENCE [LARGE SCALE MRNA] (ISOFORM 1)</scope>
</reference>
<reference key="2">
    <citation type="journal article" date="2004" name="Nat. Genet.">
        <title>Complete sequencing and characterization of 21,243 full-length human cDNAs.</title>
        <authorList>
            <person name="Ota T."/>
            <person name="Suzuki Y."/>
            <person name="Nishikawa T."/>
            <person name="Otsuki T."/>
            <person name="Sugiyama T."/>
            <person name="Irie R."/>
            <person name="Wakamatsu A."/>
            <person name="Hayashi K."/>
            <person name="Sato H."/>
            <person name="Nagai K."/>
            <person name="Kimura K."/>
            <person name="Makita H."/>
            <person name="Sekine M."/>
            <person name="Obayashi M."/>
            <person name="Nishi T."/>
            <person name="Shibahara T."/>
            <person name="Tanaka T."/>
            <person name="Ishii S."/>
            <person name="Yamamoto J."/>
            <person name="Saito K."/>
            <person name="Kawai Y."/>
            <person name="Isono Y."/>
            <person name="Nakamura Y."/>
            <person name="Nagahari K."/>
            <person name="Murakami K."/>
            <person name="Yasuda T."/>
            <person name="Iwayanagi T."/>
            <person name="Wagatsuma M."/>
            <person name="Shiratori A."/>
            <person name="Sudo H."/>
            <person name="Hosoiri T."/>
            <person name="Kaku Y."/>
            <person name="Kodaira H."/>
            <person name="Kondo H."/>
            <person name="Sugawara M."/>
            <person name="Takahashi M."/>
            <person name="Kanda K."/>
            <person name="Yokoi T."/>
            <person name="Furuya T."/>
            <person name="Kikkawa E."/>
            <person name="Omura Y."/>
            <person name="Abe K."/>
            <person name="Kamihara K."/>
            <person name="Katsuta N."/>
            <person name="Sato K."/>
            <person name="Tanikawa M."/>
            <person name="Yamazaki M."/>
            <person name="Ninomiya K."/>
            <person name="Ishibashi T."/>
            <person name="Yamashita H."/>
            <person name="Murakawa K."/>
            <person name="Fujimori K."/>
            <person name="Tanai H."/>
            <person name="Kimata M."/>
            <person name="Watanabe M."/>
            <person name="Hiraoka S."/>
            <person name="Chiba Y."/>
            <person name="Ishida S."/>
            <person name="Ono Y."/>
            <person name="Takiguchi S."/>
            <person name="Watanabe S."/>
            <person name="Yosida M."/>
            <person name="Hotuta T."/>
            <person name="Kusano J."/>
            <person name="Kanehori K."/>
            <person name="Takahashi-Fujii A."/>
            <person name="Hara H."/>
            <person name="Tanase T.-O."/>
            <person name="Nomura Y."/>
            <person name="Togiya S."/>
            <person name="Komai F."/>
            <person name="Hara R."/>
            <person name="Takeuchi K."/>
            <person name="Arita M."/>
            <person name="Imose N."/>
            <person name="Musashino K."/>
            <person name="Yuuki H."/>
            <person name="Oshima A."/>
            <person name="Sasaki N."/>
            <person name="Aotsuka S."/>
            <person name="Yoshikawa Y."/>
            <person name="Matsunawa H."/>
            <person name="Ichihara T."/>
            <person name="Shiohata N."/>
            <person name="Sano S."/>
            <person name="Moriya S."/>
            <person name="Momiyama H."/>
            <person name="Satoh N."/>
            <person name="Takami S."/>
            <person name="Terashima Y."/>
            <person name="Suzuki O."/>
            <person name="Nakagawa S."/>
            <person name="Senoh A."/>
            <person name="Mizoguchi H."/>
            <person name="Goto Y."/>
            <person name="Shimizu F."/>
            <person name="Wakebe H."/>
            <person name="Hishigaki H."/>
            <person name="Watanabe T."/>
            <person name="Sugiyama A."/>
            <person name="Takemoto M."/>
            <person name="Kawakami B."/>
            <person name="Yamazaki M."/>
            <person name="Watanabe K."/>
            <person name="Kumagai A."/>
            <person name="Itakura S."/>
            <person name="Fukuzumi Y."/>
            <person name="Fujimori Y."/>
            <person name="Komiyama M."/>
            <person name="Tashiro H."/>
            <person name="Tanigami A."/>
            <person name="Fujiwara T."/>
            <person name="Ono T."/>
            <person name="Yamada K."/>
            <person name="Fujii Y."/>
            <person name="Ozaki K."/>
            <person name="Hirao M."/>
            <person name="Ohmori Y."/>
            <person name="Kawabata A."/>
            <person name="Hikiji T."/>
            <person name="Kobatake N."/>
            <person name="Inagaki H."/>
            <person name="Ikema Y."/>
            <person name="Okamoto S."/>
            <person name="Okitani R."/>
            <person name="Kawakami T."/>
            <person name="Noguchi S."/>
            <person name="Itoh T."/>
            <person name="Shigeta K."/>
            <person name="Senba T."/>
            <person name="Matsumura K."/>
            <person name="Nakajima Y."/>
            <person name="Mizuno T."/>
            <person name="Morinaga M."/>
            <person name="Sasaki M."/>
            <person name="Togashi T."/>
            <person name="Oyama M."/>
            <person name="Hata H."/>
            <person name="Watanabe M."/>
            <person name="Komatsu T."/>
            <person name="Mizushima-Sugano J."/>
            <person name="Satoh T."/>
            <person name="Shirai Y."/>
            <person name="Takahashi Y."/>
            <person name="Nakagawa K."/>
            <person name="Okumura K."/>
            <person name="Nagase T."/>
            <person name="Nomura N."/>
            <person name="Kikuchi H."/>
            <person name="Masuho Y."/>
            <person name="Yamashita R."/>
            <person name="Nakai K."/>
            <person name="Yada T."/>
            <person name="Nakamura Y."/>
            <person name="Ohara O."/>
            <person name="Isogai T."/>
            <person name="Sugano S."/>
        </authorList>
    </citation>
    <scope>NUCLEOTIDE SEQUENCE [LARGE SCALE MRNA] (ISOFORMS 1 AND 2)</scope>
    <source>
        <tissue>Corpus callosum</tissue>
    </source>
</reference>
<reference key="3">
    <citation type="journal article" date="1999" name="Nature">
        <title>The DNA sequence of human chromosome 22.</title>
        <authorList>
            <person name="Dunham I."/>
            <person name="Hunt A.R."/>
            <person name="Collins J.E."/>
            <person name="Bruskiewich R."/>
            <person name="Beare D.M."/>
            <person name="Clamp M."/>
            <person name="Smink L.J."/>
            <person name="Ainscough R."/>
            <person name="Almeida J.P."/>
            <person name="Babbage A.K."/>
            <person name="Bagguley C."/>
            <person name="Bailey J."/>
            <person name="Barlow K.F."/>
            <person name="Bates K.N."/>
            <person name="Beasley O.P."/>
            <person name="Bird C.P."/>
            <person name="Blakey S.E."/>
            <person name="Bridgeman A.M."/>
            <person name="Buck D."/>
            <person name="Burgess J."/>
            <person name="Burrill W.D."/>
            <person name="Burton J."/>
            <person name="Carder C."/>
            <person name="Carter N.P."/>
            <person name="Chen Y."/>
            <person name="Clark G."/>
            <person name="Clegg S.M."/>
            <person name="Cobley V.E."/>
            <person name="Cole C.G."/>
            <person name="Collier R.E."/>
            <person name="Connor R."/>
            <person name="Conroy D."/>
            <person name="Corby N.R."/>
            <person name="Coville G.J."/>
            <person name="Cox A.V."/>
            <person name="Davis J."/>
            <person name="Dawson E."/>
            <person name="Dhami P.D."/>
            <person name="Dockree C."/>
            <person name="Dodsworth S.J."/>
            <person name="Durbin R.M."/>
            <person name="Ellington A.G."/>
            <person name="Evans K.L."/>
            <person name="Fey J.M."/>
            <person name="Fleming K."/>
            <person name="French L."/>
            <person name="Garner A.A."/>
            <person name="Gilbert J.G.R."/>
            <person name="Goward M.E."/>
            <person name="Grafham D.V."/>
            <person name="Griffiths M.N.D."/>
            <person name="Hall C."/>
            <person name="Hall R.E."/>
            <person name="Hall-Tamlyn G."/>
            <person name="Heathcott R.W."/>
            <person name="Ho S."/>
            <person name="Holmes S."/>
            <person name="Hunt S.E."/>
            <person name="Jones M.C."/>
            <person name="Kershaw J."/>
            <person name="Kimberley A.M."/>
            <person name="King A."/>
            <person name="Laird G.K."/>
            <person name="Langford C.F."/>
            <person name="Leversha M.A."/>
            <person name="Lloyd C."/>
            <person name="Lloyd D.M."/>
            <person name="Martyn I.D."/>
            <person name="Mashreghi-Mohammadi M."/>
            <person name="Matthews L.H."/>
            <person name="Mccann O.T."/>
            <person name="Mcclay J."/>
            <person name="Mclaren S."/>
            <person name="McMurray A.A."/>
            <person name="Milne S.A."/>
            <person name="Mortimore B.J."/>
            <person name="Odell C.N."/>
            <person name="Pavitt R."/>
            <person name="Pearce A.V."/>
            <person name="Pearson D."/>
            <person name="Phillimore B.J.C.T."/>
            <person name="Phillips S.H."/>
            <person name="Plumb R.W."/>
            <person name="Ramsay H."/>
            <person name="Ramsey Y."/>
            <person name="Rogers L."/>
            <person name="Ross M.T."/>
            <person name="Scott C.E."/>
            <person name="Sehra H.K."/>
            <person name="Skuce C.D."/>
            <person name="Smalley S."/>
            <person name="Smith M.L."/>
            <person name="Soderlund C."/>
            <person name="Spragon L."/>
            <person name="Steward C.A."/>
            <person name="Sulston J.E."/>
            <person name="Swann R.M."/>
            <person name="Vaudin M."/>
            <person name="Wall M."/>
            <person name="Wallis J.M."/>
            <person name="Whiteley M.N."/>
            <person name="Willey D.L."/>
            <person name="Williams L."/>
            <person name="Williams S.A."/>
            <person name="Williamson H."/>
            <person name="Wilmer T.E."/>
            <person name="Wilming L."/>
            <person name="Wright C.L."/>
            <person name="Hubbard T."/>
            <person name="Bentley D.R."/>
            <person name="Beck S."/>
            <person name="Rogers J."/>
            <person name="Shimizu N."/>
            <person name="Minoshima S."/>
            <person name="Kawasaki K."/>
            <person name="Sasaki T."/>
            <person name="Asakawa S."/>
            <person name="Kudoh J."/>
            <person name="Shintani A."/>
            <person name="Shibuya K."/>
            <person name="Yoshizaki Y."/>
            <person name="Aoki N."/>
            <person name="Mitsuyama S."/>
            <person name="Roe B.A."/>
            <person name="Chen F."/>
            <person name="Chu L."/>
            <person name="Crabtree J."/>
            <person name="Deschamps S."/>
            <person name="Do A."/>
            <person name="Do T."/>
            <person name="Dorman A."/>
            <person name="Fang F."/>
            <person name="Fu Y."/>
            <person name="Hu P."/>
            <person name="Hua A."/>
            <person name="Kenton S."/>
            <person name="Lai H."/>
            <person name="Lao H.I."/>
            <person name="Lewis J."/>
            <person name="Lewis S."/>
            <person name="Lin S.-P."/>
            <person name="Loh P."/>
            <person name="Malaj E."/>
            <person name="Nguyen T."/>
            <person name="Pan H."/>
            <person name="Phan S."/>
            <person name="Qi S."/>
            <person name="Qian Y."/>
            <person name="Ray L."/>
            <person name="Ren Q."/>
            <person name="Shaull S."/>
            <person name="Sloan D."/>
            <person name="Song L."/>
            <person name="Wang Q."/>
            <person name="Wang Y."/>
            <person name="Wang Z."/>
            <person name="White J."/>
            <person name="Willingham D."/>
            <person name="Wu H."/>
            <person name="Yao Z."/>
            <person name="Zhan M."/>
            <person name="Zhang G."/>
            <person name="Chissoe S."/>
            <person name="Murray J."/>
            <person name="Miller N."/>
            <person name="Minx P."/>
            <person name="Fulton R."/>
            <person name="Johnson D."/>
            <person name="Bemis G."/>
            <person name="Bentley D."/>
            <person name="Bradshaw H."/>
            <person name="Bourne S."/>
            <person name="Cordes M."/>
            <person name="Du Z."/>
            <person name="Fulton L."/>
            <person name="Goela D."/>
            <person name="Graves T."/>
            <person name="Hawkins J."/>
            <person name="Hinds K."/>
            <person name="Kemp K."/>
            <person name="Latreille P."/>
            <person name="Layman D."/>
            <person name="Ozersky P."/>
            <person name="Rohlfing T."/>
            <person name="Scheet P."/>
            <person name="Walker C."/>
            <person name="Wamsley A."/>
            <person name="Wohldmann P."/>
            <person name="Pepin K."/>
            <person name="Nelson J."/>
            <person name="Korf I."/>
            <person name="Bedell J.A."/>
            <person name="Hillier L.W."/>
            <person name="Mardis E."/>
            <person name="Waterston R."/>
            <person name="Wilson R."/>
            <person name="Emanuel B.S."/>
            <person name="Shaikh T."/>
            <person name="Kurahashi H."/>
            <person name="Saitta S."/>
            <person name="Budarf M.L."/>
            <person name="McDermid H.E."/>
            <person name="Johnson A."/>
            <person name="Wong A.C.C."/>
            <person name="Morrow B.E."/>
            <person name="Edelmann L."/>
            <person name="Kim U.J."/>
            <person name="Shizuya H."/>
            <person name="Simon M.I."/>
            <person name="Dumanski J.P."/>
            <person name="Peyrard M."/>
            <person name="Kedra D."/>
            <person name="Seroussi E."/>
            <person name="Fransson I."/>
            <person name="Tapia I."/>
            <person name="Bruder C.E."/>
            <person name="O'Brien K.P."/>
            <person name="Wilkinson P."/>
            <person name="Bodenteich A."/>
            <person name="Hartman K."/>
            <person name="Hu X."/>
            <person name="Khan A.S."/>
            <person name="Lane L."/>
            <person name="Tilahun Y."/>
            <person name="Wright H."/>
        </authorList>
    </citation>
    <scope>NUCLEOTIDE SEQUENCE [LARGE SCALE GENOMIC DNA]</scope>
</reference>
<reference key="4">
    <citation type="submission" date="2005-07" db="EMBL/GenBank/DDBJ databases">
        <authorList>
            <person name="Mural R.J."/>
            <person name="Istrail S."/>
            <person name="Sutton G.G."/>
            <person name="Florea L."/>
            <person name="Halpern A.L."/>
            <person name="Mobarry C.M."/>
            <person name="Lippert R."/>
            <person name="Walenz B."/>
            <person name="Shatkay H."/>
            <person name="Dew I."/>
            <person name="Miller J.R."/>
            <person name="Flanigan M.J."/>
            <person name="Edwards N.J."/>
            <person name="Bolanos R."/>
            <person name="Fasulo D."/>
            <person name="Halldorsson B.V."/>
            <person name="Hannenhalli S."/>
            <person name="Turner R."/>
            <person name="Yooseph S."/>
            <person name="Lu F."/>
            <person name="Nusskern D.R."/>
            <person name="Shue B.C."/>
            <person name="Zheng X.H."/>
            <person name="Zhong F."/>
            <person name="Delcher A.L."/>
            <person name="Huson D.H."/>
            <person name="Kravitz S.A."/>
            <person name="Mouchard L."/>
            <person name="Reinert K."/>
            <person name="Remington K.A."/>
            <person name="Clark A.G."/>
            <person name="Waterman M.S."/>
            <person name="Eichler E.E."/>
            <person name="Adams M.D."/>
            <person name="Hunkapiller M.W."/>
            <person name="Myers E.W."/>
            <person name="Venter J.C."/>
        </authorList>
    </citation>
    <scope>NUCLEOTIDE SEQUENCE [LARGE SCALE GENOMIC DNA]</scope>
</reference>
<reference key="5">
    <citation type="journal article" date="2004" name="Genome Res.">
        <title>The status, quality, and expansion of the NIH full-length cDNA project: the Mammalian Gene Collection (MGC).</title>
        <authorList>
            <consortium name="The MGC Project Team"/>
        </authorList>
    </citation>
    <scope>NUCLEOTIDE SEQUENCE [LARGE SCALE MRNA] (ISOFORM 3)</scope>
    <scope>NUCLEOTIDE SEQUENCE [LARGE SCALE MRNA] OF 203-404 (ISOFORMS 1/2/3)</scope>
    <source>
        <tissue>Brain</tissue>
        <tissue>Uterus</tissue>
    </source>
</reference>
<reference key="6">
    <citation type="journal article" date="1999" name="DNA Res.">
        <title>Prediction of the coding sequences of unidentified human genes. XIII. The complete sequences of 100 new cDNA clones from brain which code for large proteins in vitro.</title>
        <authorList>
            <person name="Nagase T."/>
            <person name="Ishikawa K."/>
            <person name="Suyama M."/>
            <person name="Kikuno R."/>
            <person name="Hirosawa M."/>
            <person name="Miyajima N."/>
            <person name="Tanaka A."/>
            <person name="Kotani H."/>
            <person name="Nomura N."/>
            <person name="Ohara O."/>
        </authorList>
    </citation>
    <scope>NUCLEOTIDE SEQUENCE [LARGE SCALE MRNA] OF 57-404</scope>
    <source>
        <tissue>Brain</tissue>
    </source>
</reference>
<reference key="7">
    <citation type="journal article" date="2008" name="Proc. Natl. Acad. Sci. U.S.A.">
        <title>A quantitative atlas of mitotic phosphorylation.</title>
        <authorList>
            <person name="Dephoure N."/>
            <person name="Zhou C."/>
            <person name="Villen J."/>
            <person name="Beausoleil S.A."/>
            <person name="Bakalarski C.E."/>
            <person name="Elledge S.J."/>
            <person name="Gygi S.P."/>
        </authorList>
    </citation>
    <scope>PHOSPHORYLATION [LARGE SCALE ANALYSIS] AT THR-290; THR-293 AND SER-324</scope>
    <scope>IDENTIFICATION BY MASS SPECTROMETRY [LARGE SCALE ANALYSIS]</scope>
    <source>
        <tissue>Cervix carcinoma</tissue>
    </source>
</reference>
<reference key="8">
    <citation type="journal article" date="2009" name="Anal. Chem.">
        <title>Lys-N and trypsin cover complementary parts of the phosphoproteome in a refined SCX-based approach.</title>
        <authorList>
            <person name="Gauci S."/>
            <person name="Helbig A.O."/>
            <person name="Slijper M."/>
            <person name="Krijgsveld J."/>
            <person name="Heck A.J."/>
            <person name="Mohammed S."/>
        </authorList>
    </citation>
    <scope>IDENTIFICATION BY MASS SPECTROMETRY [LARGE SCALE ANALYSIS]</scope>
</reference>
<reference key="9">
    <citation type="journal article" date="2009" name="Sci. Signal.">
        <title>Quantitative phosphoproteomic analysis of T cell receptor signaling reveals system-wide modulation of protein-protein interactions.</title>
        <authorList>
            <person name="Mayya V."/>
            <person name="Lundgren D.H."/>
            <person name="Hwang S.-I."/>
            <person name="Rezaul K."/>
            <person name="Wu L."/>
            <person name="Eng J.K."/>
            <person name="Rodionov V."/>
            <person name="Han D.K."/>
        </authorList>
    </citation>
    <scope>PHOSPHORYLATION [LARGE SCALE ANALYSIS] AT SER-279</scope>
    <scope>IDENTIFICATION BY MASS SPECTROMETRY [LARGE SCALE ANALYSIS]</scope>
    <source>
        <tissue>Leukemic T-cell</tissue>
    </source>
</reference>
<reference key="10">
    <citation type="journal article" date="2011" name="Sci. Signal.">
        <title>System-wide temporal characterization of the proteome and phosphoproteome of human embryonic stem cell differentiation.</title>
        <authorList>
            <person name="Rigbolt K.T."/>
            <person name="Prokhorova T.A."/>
            <person name="Akimov V."/>
            <person name="Henningsen J."/>
            <person name="Johansen P.T."/>
            <person name="Kratchmarova I."/>
            <person name="Kassem M."/>
            <person name="Mann M."/>
            <person name="Olsen J.V."/>
            <person name="Blagoev B."/>
        </authorList>
    </citation>
    <scope>IDENTIFICATION BY MASS SPECTROMETRY [LARGE SCALE ANALYSIS]</scope>
</reference>
<reference key="11">
    <citation type="journal article" date="2013" name="J. Proteome Res.">
        <title>Toward a comprehensive characterization of a human cancer cell phosphoproteome.</title>
        <authorList>
            <person name="Zhou H."/>
            <person name="Di Palma S."/>
            <person name="Preisinger C."/>
            <person name="Peng M."/>
            <person name="Polat A.N."/>
            <person name="Heck A.J."/>
            <person name="Mohammed S."/>
        </authorList>
    </citation>
    <scope>PHOSPHORYLATION [LARGE SCALE ANALYSIS] AT SER-267; THR-293; SER-304; SER-306 AND SER-362</scope>
    <scope>IDENTIFICATION BY MASS SPECTROMETRY [LARGE SCALE ANALYSIS]</scope>
    <source>
        <tissue>Cervix carcinoma</tissue>
        <tissue>Erythroleukemia</tissue>
    </source>
</reference>
<reference key="12">
    <citation type="journal article" date="2014" name="J. Proteomics">
        <title>An enzyme assisted RP-RPLC approach for in-depth analysis of human liver phosphoproteome.</title>
        <authorList>
            <person name="Bian Y."/>
            <person name="Song C."/>
            <person name="Cheng K."/>
            <person name="Dong M."/>
            <person name="Wang F."/>
            <person name="Huang J."/>
            <person name="Sun D."/>
            <person name="Wang L."/>
            <person name="Ye M."/>
            <person name="Zou H."/>
        </authorList>
    </citation>
    <scope>PHOSPHORYLATION [LARGE SCALE ANALYSIS] AT SER-267</scope>
    <scope>IDENTIFICATION BY MASS SPECTROMETRY [LARGE SCALE ANALYSIS]</scope>
    <source>
        <tissue>Liver</tissue>
    </source>
</reference>
<sequence>MLRAIAEERGRLSLRREVCGLGCFKDDRIVFWTWMFSTYFMEKWAPRQDDMLFYVRRKLAYSGSESGADGRKAAEPEVEVEVYRRDSKKLPGLGDPDIDWEESVCLNLILQKLDYMVTCAVCTRADGGDIHIHKKKSQQVFASPSKHPMDSKGEESKISYPNIFFMIDSFEEVFSDMTVGEGEMVCVELVASDKTNTFQGVIFQGSIRYEALKKVYDNRVSVAARMAQKMSFGFYKYSNMEFVRMKGPQGKGHAEMAVSRVSTGDTSPCGTEEDSSPASPMHERVTSFSTPPTPERNNRPAFFSPSLKRKVPRNRIAEMKKSHSANDSEEFFREDDGGADLHNATNLRSRSLSGTGRSLVGSWLKLNRADGNFLLYAHLTYVTLPLHRILTDILEVRQKPILMT</sequence>
<protein>
    <recommendedName>
        <fullName>Uncharacterized protein KIAA0930</fullName>
    </recommendedName>
</protein>
<proteinExistence type="evidence at protein level"/>
<feature type="chain" id="PRO_0000255938" description="Uncharacterized protein KIAA0930">
    <location>
        <begin position="1"/>
        <end position="404"/>
    </location>
</feature>
<feature type="region of interest" description="Disordered" evidence="3">
    <location>
        <begin position="261"/>
        <end position="307"/>
    </location>
</feature>
<feature type="region of interest" description="Disordered" evidence="3">
    <location>
        <begin position="320"/>
        <end position="340"/>
    </location>
</feature>
<feature type="compositionally biased region" description="Basic and acidic residues" evidence="3">
    <location>
        <begin position="320"/>
        <end position="336"/>
    </location>
</feature>
<feature type="modified residue" description="Phosphoserine" evidence="8 9">
    <location>
        <position position="267"/>
    </location>
</feature>
<feature type="modified residue" description="Phosphoserine" evidence="1">
    <location>
        <position position="276"/>
    </location>
</feature>
<feature type="modified residue" description="Phosphoserine" evidence="7">
    <location>
        <position position="279"/>
    </location>
</feature>
<feature type="modified residue" description="Phosphothreonine" evidence="6">
    <location>
        <position position="290"/>
    </location>
</feature>
<feature type="modified residue" description="Phosphothreonine" evidence="6 8">
    <location>
        <position position="293"/>
    </location>
</feature>
<feature type="modified residue" description="Phosphoserine" evidence="8">
    <location>
        <position position="304"/>
    </location>
</feature>
<feature type="modified residue" description="Phosphoserine" evidence="8">
    <location>
        <position position="306"/>
    </location>
</feature>
<feature type="modified residue" description="Phosphoserine" evidence="6">
    <location>
        <position position="324"/>
    </location>
</feature>
<feature type="modified residue" description="Phosphoserine" evidence="2">
    <location>
        <position position="358"/>
    </location>
</feature>
<feature type="modified residue" description="Phosphoserine" evidence="8">
    <location>
        <position position="362"/>
    </location>
</feature>
<feature type="splice variant" id="VSP_021310" description="In isoform 3." evidence="5">
    <location>
        <begin position="1"/>
        <end position="34"/>
    </location>
</feature>
<feature type="splice variant" id="VSP_021309" description="In isoform 2." evidence="4">
    <original>MLRAIAEERGRLSLRREVCGL</original>
    <variation>MGSQAAAEWRNWASWEVSSSLSGCSM</variation>
    <location>
        <begin position="1"/>
        <end position="21"/>
    </location>
</feature>
<gene>
    <name type="primary">KIAA0930</name>
    <name type="synonym">C22orf9</name>
</gene>
<dbReference type="EMBL" id="CR456402">
    <property type="protein sequence ID" value="CAG30288.1"/>
    <property type="molecule type" value="mRNA"/>
</dbReference>
<dbReference type="EMBL" id="AK094937">
    <property type="protein sequence ID" value="BAG52960.1"/>
    <property type="molecule type" value="mRNA"/>
</dbReference>
<dbReference type="EMBL" id="AK124648">
    <property type="protein sequence ID" value="BAC85917.1"/>
    <property type="molecule type" value="mRNA"/>
</dbReference>
<dbReference type="EMBL" id="AL008718">
    <property type="status" value="NOT_ANNOTATED_CDS"/>
    <property type="molecule type" value="Genomic_DNA"/>
</dbReference>
<dbReference type="EMBL" id="CH471138">
    <property type="protein sequence ID" value="EAW73376.1"/>
    <property type="molecule type" value="Genomic_DNA"/>
</dbReference>
<dbReference type="EMBL" id="BC016882">
    <property type="protein sequence ID" value="AAH16882.1"/>
    <property type="molecule type" value="mRNA"/>
</dbReference>
<dbReference type="EMBL" id="BC053595">
    <property type="protein sequence ID" value="AAH53595.1"/>
    <property type="molecule type" value="mRNA"/>
</dbReference>
<dbReference type="EMBL" id="AB023147">
    <property type="protein sequence ID" value="BAA76774.1"/>
    <property type="molecule type" value="mRNA"/>
</dbReference>
<dbReference type="CCDS" id="CCDS33665.1">
    <molecule id="Q6ICG6-1"/>
</dbReference>
<dbReference type="CCDS" id="CCDS33666.1">
    <molecule id="Q6ICG6-2"/>
</dbReference>
<dbReference type="RefSeq" id="NP_001009880.1">
    <molecule id="Q6ICG6-1"/>
    <property type="nucleotide sequence ID" value="NM_001009880.2"/>
</dbReference>
<dbReference type="RefSeq" id="NP_056079.1">
    <molecule id="Q6ICG6-2"/>
    <property type="nucleotide sequence ID" value="NM_015264.2"/>
</dbReference>
<dbReference type="RefSeq" id="XP_011528319.1">
    <property type="nucleotide sequence ID" value="XM_011530017.2"/>
</dbReference>
<dbReference type="BioGRID" id="116904">
    <property type="interactions" value="55"/>
</dbReference>
<dbReference type="FunCoup" id="Q6ICG6">
    <property type="interactions" value="67"/>
</dbReference>
<dbReference type="IntAct" id="Q6ICG6">
    <property type="interactions" value="21"/>
</dbReference>
<dbReference type="MINT" id="Q6ICG6"/>
<dbReference type="STRING" id="9606.ENSP00000251993"/>
<dbReference type="GlyGen" id="Q6ICG6">
    <property type="glycosylation" value="4 sites, 1 O-linked glycan (3 sites)"/>
</dbReference>
<dbReference type="iPTMnet" id="Q6ICG6"/>
<dbReference type="PhosphoSitePlus" id="Q6ICG6"/>
<dbReference type="BioMuta" id="KIAA0930"/>
<dbReference type="DMDM" id="74748760"/>
<dbReference type="jPOST" id="Q6ICG6"/>
<dbReference type="MassIVE" id="Q6ICG6"/>
<dbReference type="PaxDb" id="9606-ENSP00000251993"/>
<dbReference type="PeptideAtlas" id="Q6ICG6"/>
<dbReference type="ProteomicsDB" id="66386">
    <molecule id="Q6ICG6-1"/>
</dbReference>
<dbReference type="ProteomicsDB" id="66387">
    <molecule id="Q6ICG6-2"/>
</dbReference>
<dbReference type="ProteomicsDB" id="66388">
    <molecule id="Q6ICG6-3"/>
</dbReference>
<dbReference type="Pumba" id="Q6ICG6"/>
<dbReference type="Antibodypedia" id="27826">
    <property type="antibodies" value="68 antibodies from 14 providers"/>
</dbReference>
<dbReference type="DNASU" id="23313"/>
<dbReference type="Ensembl" id="ENST00000251993.11">
    <molecule id="Q6ICG6-2"/>
    <property type="protein sequence ID" value="ENSP00000251993.7"/>
    <property type="gene ID" value="ENSG00000100364.19"/>
</dbReference>
<dbReference type="Ensembl" id="ENST00000336156.10">
    <molecule id="Q6ICG6-1"/>
    <property type="protein sequence ID" value="ENSP00000336720.4"/>
    <property type="gene ID" value="ENSG00000100364.19"/>
</dbReference>
<dbReference type="Ensembl" id="ENST00000391627.6">
    <molecule id="Q6ICG6-3"/>
    <property type="protein sequence ID" value="ENSP00000375485.2"/>
    <property type="gene ID" value="ENSG00000100364.19"/>
</dbReference>
<dbReference type="GeneID" id="23313"/>
<dbReference type="KEGG" id="hsa:23313"/>
<dbReference type="MANE-Select" id="ENST00000336156.10">
    <property type="protein sequence ID" value="ENSP00000336720.4"/>
    <property type="RefSeq nucleotide sequence ID" value="NM_001009880.2"/>
    <property type="RefSeq protein sequence ID" value="NP_001009880.1"/>
</dbReference>
<dbReference type="UCSC" id="uc003bfw.2">
    <molecule id="Q6ICG6-1"/>
    <property type="organism name" value="human"/>
</dbReference>
<dbReference type="AGR" id="HGNC:1314"/>
<dbReference type="CTD" id="23313"/>
<dbReference type="DisGeNET" id="23313"/>
<dbReference type="GeneCards" id="KIAA0930"/>
<dbReference type="HGNC" id="HGNC:1314">
    <property type="gene designation" value="KIAA0930"/>
</dbReference>
<dbReference type="HPA" id="ENSG00000100364">
    <property type="expression patterns" value="Tissue enhanced (brain)"/>
</dbReference>
<dbReference type="MIM" id="619709">
    <property type="type" value="gene"/>
</dbReference>
<dbReference type="neXtProt" id="NX_Q6ICG6"/>
<dbReference type="OpenTargets" id="ENSG00000100364"/>
<dbReference type="PharmGKB" id="PA128394623"/>
<dbReference type="VEuPathDB" id="HostDB:ENSG00000100364"/>
<dbReference type="eggNOG" id="KOG2465">
    <property type="taxonomic scope" value="Eukaryota"/>
</dbReference>
<dbReference type="GeneTree" id="ENSGT00390000004190"/>
<dbReference type="InParanoid" id="Q6ICG6"/>
<dbReference type="OMA" id="SAATHCH"/>
<dbReference type="OrthoDB" id="1906921at2759"/>
<dbReference type="PAN-GO" id="Q6ICG6">
    <property type="GO annotations" value="0 GO annotations based on evolutionary models"/>
</dbReference>
<dbReference type="PhylomeDB" id="Q6ICG6"/>
<dbReference type="TreeFam" id="TF313801"/>
<dbReference type="PathwayCommons" id="Q6ICG6"/>
<dbReference type="SignaLink" id="Q6ICG6"/>
<dbReference type="BioGRID-ORCS" id="23313">
    <property type="hits" value="12 hits in 1160 CRISPR screens"/>
</dbReference>
<dbReference type="ChiTaRS" id="KIAA0930">
    <property type="organism name" value="human"/>
</dbReference>
<dbReference type="GeneWiki" id="C22orf9"/>
<dbReference type="GenomeRNAi" id="23313"/>
<dbReference type="Pharos" id="Q6ICG6">
    <property type="development level" value="Tbio"/>
</dbReference>
<dbReference type="PRO" id="PR:Q6ICG6"/>
<dbReference type="Proteomes" id="UP000005640">
    <property type="component" value="Chromosome 22"/>
</dbReference>
<dbReference type="RNAct" id="Q6ICG6">
    <property type="molecule type" value="protein"/>
</dbReference>
<dbReference type="Bgee" id="ENSG00000100364">
    <property type="expression patterns" value="Expressed in amygdala and 197 other cell types or tissues"/>
</dbReference>
<dbReference type="ExpressionAtlas" id="Q6ICG6">
    <property type="expression patterns" value="baseline and differential"/>
</dbReference>
<dbReference type="InterPro" id="IPR019141">
    <property type="entry name" value="DUF2045"/>
</dbReference>
<dbReference type="PANTHER" id="PTHR21477:SF13">
    <property type="entry name" value="KIAA0930"/>
    <property type="match status" value="1"/>
</dbReference>
<dbReference type="PANTHER" id="PTHR21477">
    <property type="entry name" value="ZGC:172139"/>
    <property type="match status" value="1"/>
</dbReference>
<dbReference type="Pfam" id="PF09741">
    <property type="entry name" value="DUF2045"/>
    <property type="match status" value="1"/>
</dbReference>